<organism>
    <name type="scientific">Methanocorpusculum labreanum (strain ATCC 43576 / DSM 4855 / Z)</name>
    <dbReference type="NCBI Taxonomy" id="410358"/>
    <lineage>
        <taxon>Archaea</taxon>
        <taxon>Methanobacteriati</taxon>
        <taxon>Methanobacteriota</taxon>
        <taxon>Stenosarchaea group</taxon>
        <taxon>Methanomicrobia</taxon>
        <taxon>Methanomicrobiales</taxon>
        <taxon>Methanocorpusculaceae</taxon>
        <taxon>Methanocorpusculum</taxon>
    </lineage>
</organism>
<sequence length="487" mass="53097">MLQDSVGEVTTKYHALSVPLSLECGVSLSGVRIAYERYGRADGKNVILVCHPLTGDAHAAGFHKGDTKPGWWDGIIGPGKALDTNRYCVIAANVLGGCKGSTGPSSEDPATGKPYGTTFPVITIRDMVHAEHQLLEDLGISELYAVIGGSMGGMQAMQWSVEFPSFVRRIICIASAGYTTPMHIAFGAVGRAAIMSDPEWNGGNYPAEKKPNHGLSLARMMAHITYLSDESMRTKFGRRLQKQDAFGYGFDTEFSVESYLQHQGETFVERFDPNSYLYITRAVDYYDLTKNGSLTEGLAATQAKFLIISVSSDWLYPPYLSQEIMLALTTNNREARYAEIVSPHGHDGFLLENAQLNYIVGQFLTPMTVEDLMTNNPPSIQETSSIREAAELMIGHEINHLPVVSGNGTLSGIVTSWDIAKSVAGDFQDLAEIMTKDVITIQRSDSLRLAASLMEKHAISALPVVDDSNHVLGMLTSETLSLSEVLQ</sequence>
<name>METXA_METLZ</name>
<proteinExistence type="evidence at protein level"/>
<protein>
    <recommendedName>
        <fullName evidence="1">Homoserine O-acetyltransferase</fullName>
        <shortName evidence="1 3">HAT</shortName>
        <ecNumber evidence="1 2">2.3.1.31</ecNumber>
    </recommendedName>
    <alternativeName>
        <fullName evidence="1">Homoserine transacetylase</fullName>
        <shortName evidence="1">HTA</shortName>
    </alternativeName>
</protein>
<dbReference type="EC" id="2.3.1.31" evidence="1 2"/>
<dbReference type="EMBL" id="CP000559">
    <property type="protein sequence ID" value="ABN06719.1"/>
    <property type="molecule type" value="Genomic_DNA"/>
</dbReference>
<dbReference type="RefSeq" id="WP_011832920.1">
    <property type="nucleotide sequence ID" value="NC_008942.1"/>
</dbReference>
<dbReference type="SMR" id="A2SQW3"/>
<dbReference type="STRING" id="410358.Mlab_0545"/>
<dbReference type="ESTHER" id="metlz-a2sqw3">
    <property type="family name" value="Homoserine_transacetylase"/>
</dbReference>
<dbReference type="GeneID" id="4795912"/>
<dbReference type="KEGG" id="mla:Mlab_0545"/>
<dbReference type="eggNOG" id="arCOG00627">
    <property type="taxonomic scope" value="Archaea"/>
</dbReference>
<dbReference type="HOGENOM" id="CLU_028760_1_1_2"/>
<dbReference type="OrthoDB" id="295172at2157"/>
<dbReference type="UniPathway" id="UPA00051">
    <property type="reaction ID" value="UER00074"/>
</dbReference>
<dbReference type="Proteomes" id="UP000000365">
    <property type="component" value="Chromosome"/>
</dbReference>
<dbReference type="GO" id="GO:0005737">
    <property type="term" value="C:cytoplasm"/>
    <property type="evidence" value="ECO:0007669"/>
    <property type="project" value="UniProtKB-SubCell"/>
</dbReference>
<dbReference type="GO" id="GO:0004414">
    <property type="term" value="F:homoserine O-acetyltransferase activity"/>
    <property type="evidence" value="ECO:0007669"/>
    <property type="project" value="UniProtKB-UniRule"/>
</dbReference>
<dbReference type="GO" id="GO:0009092">
    <property type="term" value="P:homoserine metabolic process"/>
    <property type="evidence" value="ECO:0007669"/>
    <property type="project" value="TreeGrafter"/>
</dbReference>
<dbReference type="GO" id="GO:0009086">
    <property type="term" value="P:methionine biosynthetic process"/>
    <property type="evidence" value="ECO:0007669"/>
    <property type="project" value="UniProtKB-UniRule"/>
</dbReference>
<dbReference type="CDD" id="cd04605">
    <property type="entry name" value="CBS_pair_arch_MET2_assoc"/>
    <property type="match status" value="1"/>
</dbReference>
<dbReference type="FunFam" id="1.10.1740.110:FF:000001">
    <property type="entry name" value="Homoserine O-acetyltransferase"/>
    <property type="match status" value="1"/>
</dbReference>
<dbReference type="Gene3D" id="1.10.1740.110">
    <property type="match status" value="1"/>
</dbReference>
<dbReference type="Gene3D" id="3.40.50.1820">
    <property type="entry name" value="alpha/beta hydrolase"/>
    <property type="match status" value="1"/>
</dbReference>
<dbReference type="Gene3D" id="3.10.580.10">
    <property type="entry name" value="CBS-domain"/>
    <property type="match status" value="1"/>
</dbReference>
<dbReference type="HAMAP" id="MF_00296">
    <property type="entry name" value="MetX_acyltransf"/>
    <property type="match status" value="1"/>
</dbReference>
<dbReference type="InterPro" id="IPR000073">
    <property type="entry name" value="AB_hydrolase_1"/>
</dbReference>
<dbReference type="InterPro" id="IPR029058">
    <property type="entry name" value="AB_hydrolase_fold"/>
</dbReference>
<dbReference type="InterPro" id="IPR000644">
    <property type="entry name" value="CBS_dom"/>
</dbReference>
<dbReference type="InterPro" id="IPR046342">
    <property type="entry name" value="CBS_dom_sf"/>
</dbReference>
<dbReference type="InterPro" id="IPR008220">
    <property type="entry name" value="HAT_MetX-like"/>
</dbReference>
<dbReference type="NCBIfam" id="TIGR01392">
    <property type="entry name" value="homoserO_Ac_trn"/>
    <property type="match status" value="1"/>
</dbReference>
<dbReference type="NCBIfam" id="NF001209">
    <property type="entry name" value="PRK00175.1"/>
    <property type="match status" value="1"/>
</dbReference>
<dbReference type="PANTHER" id="PTHR32268">
    <property type="entry name" value="HOMOSERINE O-ACETYLTRANSFERASE"/>
    <property type="match status" value="1"/>
</dbReference>
<dbReference type="PANTHER" id="PTHR32268:SF11">
    <property type="entry name" value="HOMOSERINE O-ACETYLTRANSFERASE"/>
    <property type="match status" value="1"/>
</dbReference>
<dbReference type="Pfam" id="PF00561">
    <property type="entry name" value="Abhydrolase_1"/>
    <property type="match status" value="1"/>
</dbReference>
<dbReference type="Pfam" id="PF00571">
    <property type="entry name" value="CBS"/>
    <property type="match status" value="2"/>
</dbReference>
<dbReference type="SMART" id="SM00116">
    <property type="entry name" value="CBS"/>
    <property type="match status" value="2"/>
</dbReference>
<dbReference type="SUPFAM" id="SSF53474">
    <property type="entry name" value="alpha/beta-Hydrolases"/>
    <property type="match status" value="1"/>
</dbReference>
<dbReference type="SUPFAM" id="SSF54631">
    <property type="entry name" value="CBS-domain pair"/>
    <property type="match status" value="1"/>
</dbReference>
<dbReference type="PROSITE" id="PS51371">
    <property type="entry name" value="CBS"/>
    <property type="match status" value="2"/>
</dbReference>
<evidence type="ECO:0000255" key="1">
    <source>
        <dbReference type="HAMAP-Rule" id="MF_00296"/>
    </source>
</evidence>
<evidence type="ECO:0000269" key="2">
    <source>
    </source>
</evidence>
<evidence type="ECO:0000303" key="3">
    <source>
    </source>
</evidence>
<evidence type="ECO:0000312" key="4">
    <source>
        <dbReference type="EMBL" id="ABN06719.1"/>
    </source>
</evidence>
<reference key="1">
    <citation type="journal article" date="2009" name="Stand. Genomic Sci.">
        <title>Complete genome sequence of Methanocorpusculum labreanum type strain Z.</title>
        <authorList>
            <person name="Anderson I.J."/>
            <person name="Sieprawska-Lupa M."/>
            <person name="Goltsman E."/>
            <person name="Lapidus A."/>
            <person name="Copeland A."/>
            <person name="Glavina Del Rio T."/>
            <person name="Tice H."/>
            <person name="Dalin E."/>
            <person name="Barry K."/>
            <person name="Pitluck S."/>
            <person name="Hauser L."/>
            <person name="Land M."/>
            <person name="Lucas S."/>
            <person name="Richardson P."/>
            <person name="Whitman W.B."/>
            <person name="Kyrpides N.C."/>
        </authorList>
    </citation>
    <scope>NUCLEOTIDE SEQUENCE [LARGE SCALE GENOMIC DNA]</scope>
    <source>
        <strain>ATCC 43576 / DSM 4855 / Z</strain>
    </source>
</reference>
<reference key="2">
    <citation type="journal article" date="2017" name="Nat. Chem. Biol.">
        <title>Parallel evolution of non-homologous isofunctional enzymes in methionine biosynthesis.</title>
        <authorList>
            <person name="Bastard K."/>
            <person name="Perret A."/>
            <person name="Mariage A."/>
            <person name="Bessonnet T."/>
            <person name="Pinet-Turpault A."/>
            <person name="Petit J.L."/>
            <person name="Darii E."/>
            <person name="Bazire P."/>
            <person name="Vergne-Vaxelaire C."/>
            <person name="Brewee C."/>
            <person name="Debard A."/>
            <person name="Pellouin V."/>
            <person name="Besnard-Gonnet M."/>
            <person name="Artiguenave F."/>
            <person name="Medigue C."/>
            <person name="Vallenet D."/>
            <person name="Danchin A."/>
            <person name="Zaparucha A."/>
            <person name="Weissenbach J."/>
            <person name="Salanoubat M."/>
            <person name="de Berardinis V."/>
        </authorList>
    </citation>
    <scope>FUNCTION</scope>
    <scope>CATALYTIC ACTIVITY</scope>
</reference>
<gene>
    <name evidence="1 3" type="primary">metXA</name>
    <name evidence="4" type="ordered locus">Mlab_0545</name>
</gene>
<keyword id="KW-0012">Acyltransferase</keyword>
<keyword id="KW-0028">Amino-acid biosynthesis</keyword>
<keyword id="KW-0129">CBS domain</keyword>
<keyword id="KW-0963">Cytoplasm</keyword>
<keyword id="KW-0486">Methionine biosynthesis</keyword>
<keyword id="KW-1185">Reference proteome</keyword>
<keyword id="KW-0677">Repeat</keyword>
<keyword id="KW-0808">Transferase</keyword>
<accession>A2SQW3</accession>
<comment type="function">
    <text evidence="1 2">Transfers an acetyl group from acetyl-CoA to L-homoserine, forming acetyl-L-homoserine.</text>
</comment>
<comment type="catalytic activity">
    <reaction evidence="1 2">
        <text>L-homoserine + acetyl-CoA = O-acetyl-L-homoserine + CoA</text>
        <dbReference type="Rhea" id="RHEA:13701"/>
        <dbReference type="ChEBI" id="CHEBI:57287"/>
        <dbReference type="ChEBI" id="CHEBI:57288"/>
        <dbReference type="ChEBI" id="CHEBI:57476"/>
        <dbReference type="ChEBI" id="CHEBI:57716"/>
        <dbReference type="EC" id="2.3.1.31"/>
    </reaction>
</comment>
<comment type="pathway">
    <text evidence="1">Amino-acid biosynthesis; L-methionine biosynthesis via de novo pathway; O-acetyl-L-homoserine from L-homoserine: step 1/1.</text>
</comment>
<comment type="subunit">
    <text evidence="1">Homodimer.</text>
</comment>
<comment type="subcellular location">
    <subcellularLocation>
        <location evidence="1">Cytoplasm</location>
    </subcellularLocation>
</comment>
<comment type="similarity">
    <text evidence="1">Belongs to the AB hydrolase superfamily. MetX family.</text>
</comment>
<feature type="chain" id="PRO_0000440289" description="Homoserine O-acetyltransferase">
    <location>
        <begin position="1"/>
        <end position="487"/>
    </location>
</feature>
<feature type="domain" description="AB hydrolase-1" evidence="1">
    <location>
        <begin position="45"/>
        <end position="352"/>
    </location>
</feature>
<feature type="domain" description="CBS 1" evidence="1">
    <location>
        <begin position="373"/>
        <end position="430"/>
    </location>
</feature>
<feature type="domain" description="CBS 2" evidence="1">
    <location>
        <begin position="434"/>
        <end position="487"/>
    </location>
</feature>
<feature type="active site" description="Nucleophile" evidence="1">
    <location>
        <position position="150"/>
    </location>
</feature>
<feature type="active site" evidence="1">
    <location>
        <position position="313"/>
    </location>
</feature>
<feature type="active site" evidence="1">
    <location>
        <position position="346"/>
    </location>
</feature>
<feature type="binding site" evidence="1">
    <location>
        <position position="219"/>
    </location>
    <ligand>
        <name>substrate</name>
    </ligand>
</feature>
<feature type="binding site" evidence="1">
    <location>
        <position position="347"/>
    </location>
    <ligand>
        <name>substrate</name>
    </ligand>
</feature>